<comment type="function">
    <text>This molybdenum-iron protein is part of the nitrogenase complex that catalyzes the key enzymatic reactions in nitrogen fixation.</text>
</comment>
<comment type="catalytic activity">
    <reaction>
        <text>N2 + 8 reduced [2Fe-2S]-[ferredoxin] + 16 ATP + 16 H2O = H2 + 8 oxidized [2Fe-2S]-[ferredoxin] + 2 NH4(+) + 16 ADP + 16 phosphate + 6 H(+)</text>
        <dbReference type="Rhea" id="RHEA:21448"/>
        <dbReference type="Rhea" id="RHEA-COMP:10000"/>
        <dbReference type="Rhea" id="RHEA-COMP:10001"/>
        <dbReference type="ChEBI" id="CHEBI:15377"/>
        <dbReference type="ChEBI" id="CHEBI:15378"/>
        <dbReference type="ChEBI" id="CHEBI:17997"/>
        <dbReference type="ChEBI" id="CHEBI:18276"/>
        <dbReference type="ChEBI" id="CHEBI:28938"/>
        <dbReference type="ChEBI" id="CHEBI:30616"/>
        <dbReference type="ChEBI" id="CHEBI:33737"/>
        <dbReference type="ChEBI" id="CHEBI:33738"/>
        <dbReference type="ChEBI" id="CHEBI:43474"/>
        <dbReference type="ChEBI" id="CHEBI:456216"/>
        <dbReference type="EC" id="1.18.6.1"/>
    </reaction>
</comment>
<comment type="cofactor">
    <cofactor evidence="1">
        <name>[8Fe-7S] cluster</name>
        <dbReference type="ChEBI" id="CHEBI:21143"/>
    </cofactor>
    <text evidence="1">Binds 1 [8Fe-7S] cluster per heterodimer.</text>
</comment>
<comment type="cofactor">
    <cofactor evidence="1">
        <name>[7Fe-Mo-9S-C-homocitryl] cluster</name>
        <dbReference type="ChEBI" id="CHEBI:30409"/>
    </cofactor>
    <text evidence="1">Binds 1 [7Fe-Mo-9S-C-homocitryl] cluster per subunit.</text>
</comment>
<comment type="subunit">
    <text>Tetramer of two alpha and two beta chains. Forms complex with the iron protein (nitrogenase component 2).</text>
</comment>
<comment type="similarity">
    <text evidence="3">Belongs to the NifD/NifK/NifE/NifN family.</text>
</comment>
<organism>
    <name type="scientific">Anabaena sp. (strain L31)</name>
    <dbReference type="NCBI Taxonomy" id="29412"/>
    <lineage>
        <taxon>Bacteria</taxon>
        <taxon>Bacillati</taxon>
        <taxon>Cyanobacteriota</taxon>
        <taxon>Cyanophyceae</taxon>
        <taxon>Nostocales</taxon>
        <taxon>Nostocaceae</taxon>
        <taxon>Anabaena</taxon>
    </lineage>
</organism>
<dbReference type="EC" id="1.18.6.1"/>
<dbReference type="EMBL" id="L04499">
    <property type="protein sequence ID" value="AAA22015.1"/>
    <property type="molecule type" value="Genomic_DNA"/>
</dbReference>
<dbReference type="BioCyc" id="MetaCyc:MONOMER-16468"/>
<dbReference type="GO" id="GO:0005524">
    <property type="term" value="F:ATP binding"/>
    <property type="evidence" value="ECO:0007669"/>
    <property type="project" value="UniProtKB-KW"/>
</dbReference>
<dbReference type="GO" id="GO:0051536">
    <property type="term" value="F:iron-sulfur cluster binding"/>
    <property type="evidence" value="ECO:0007669"/>
    <property type="project" value="UniProtKB-KW"/>
</dbReference>
<dbReference type="GO" id="GO:0046872">
    <property type="term" value="F:metal ion binding"/>
    <property type="evidence" value="ECO:0007669"/>
    <property type="project" value="UniProtKB-KW"/>
</dbReference>
<dbReference type="GO" id="GO:0016163">
    <property type="term" value="F:nitrogenase activity"/>
    <property type="evidence" value="ECO:0007669"/>
    <property type="project" value="UniProtKB-EC"/>
</dbReference>
<dbReference type="GO" id="GO:0009399">
    <property type="term" value="P:nitrogen fixation"/>
    <property type="evidence" value="ECO:0007669"/>
    <property type="project" value="UniProtKB-KW"/>
</dbReference>
<feature type="chain" id="PRO_0000153051" description="Nitrogenase molybdenum-iron protein alpha chain">
    <location>
        <begin position="1"/>
        <end position="23" status="greater than"/>
    </location>
</feature>
<feature type="region of interest" description="Disordered" evidence="2">
    <location>
        <begin position="1"/>
        <end position="23"/>
    </location>
</feature>
<feature type="compositionally biased region" description="Basic and acidic residues" evidence="2">
    <location>
        <begin position="12"/>
        <end position="23"/>
    </location>
</feature>
<feature type="non-terminal residue">
    <location>
        <position position="23"/>
    </location>
</feature>
<accession>P33177</accession>
<sequence length="23" mass="2666">MTPPENKNLVQENKELIQEVLKA</sequence>
<proteinExistence type="inferred from homology"/>
<reference key="1">
    <citation type="journal article" date="1993" name="Biochim. Biophys. Acta">
        <title>Cloning and nucleotide sequence of the gene for dinitrogenase reductase (nifH) from the heterocyst-forming cyanobacterium Anabaena sp. L31.</title>
        <authorList>
            <person name="Murphy S.T."/>
            <person name="Jackman D.M."/>
            <person name="Mulligan M.E."/>
        </authorList>
    </citation>
    <scope>NUCLEOTIDE SEQUENCE [GENOMIC DNA]</scope>
</reference>
<protein>
    <recommendedName>
        <fullName>Nitrogenase molybdenum-iron protein alpha chain</fullName>
        <ecNumber>1.18.6.1</ecNumber>
    </recommendedName>
    <alternativeName>
        <fullName>Dinitrogenase</fullName>
    </alternativeName>
    <alternativeName>
        <fullName>Nitrogenase component I</fullName>
    </alternativeName>
</protein>
<evidence type="ECO:0000250" key="1"/>
<evidence type="ECO:0000256" key="2">
    <source>
        <dbReference type="SAM" id="MobiDB-lite"/>
    </source>
</evidence>
<evidence type="ECO:0000305" key="3"/>
<keyword id="KW-0067">ATP-binding</keyword>
<keyword id="KW-0408">Iron</keyword>
<keyword id="KW-0411">Iron-sulfur</keyword>
<keyword id="KW-0479">Metal-binding</keyword>
<keyword id="KW-0500">Molybdenum</keyword>
<keyword id="KW-0535">Nitrogen fixation</keyword>
<keyword id="KW-0547">Nucleotide-binding</keyword>
<keyword id="KW-0560">Oxidoreductase</keyword>
<name>NIFD_ANASL</name>
<gene>
    <name type="primary">nifD</name>
</gene>